<evidence type="ECO:0000255" key="1">
    <source>
        <dbReference type="HAMAP-Rule" id="MF_01008"/>
    </source>
</evidence>
<evidence type="ECO:0000255" key="2">
    <source>
        <dbReference type="PROSITE-ProRule" id="PRU01076"/>
    </source>
</evidence>
<evidence type="ECO:0000269" key="3">
    <source>
    </source>
</evidence>
<evidence type="ECO:0000305" key="4"/>
<name>MRAZ_MYCGE</name>
<dbReference type="EMBL" id="L43967">
    <property type="protein sequence ID" value="AAC71442.2"/>
    <property type="molecule type" value="Genomic_DNA"/>
</dbReference>
<dbReference type="EMBL" id="U02195">
    <property type="protein sequence ID" value="AAD12481.1"/>
    <property type="molecule type" value="Genomic_DNA"/>
</dbReference>
<dbReference type="RefSeq" id="WP_010869380.1">
    <property type="nucleotide sequence ID" value="NC_000908.2"/>
</dbReference>
<dbReference type="SMR" id="P47463"/>
<dbReference type="FunCoup" id="P47463">
    <property type="interactions" value="75"/>
</dbReference>
<dbReference type="STRING" id="243273.MG_221"/>
<dbReference type="GeneID" id="88282366"/>
<dbReference type="KEGG" id="mge:MG_221"/>
<dbReference type="eggNOG" id="COG2001">
    <property type="taxonomic scope" value="Bacteria"/>
</dbReference>
<dbReference type="HOGENOM" id="CLU_107907_0_2_14"/>
<dbReference type="InParanoid" id="P47463"/>
<dbReference type="OrthoDB" id="9807753at2"/>
<dbReference type="BioCyc" id="MGEN243273:G1GJ2-267-MONOMER"/>
<dbReference type="Proteomes" id="UP000000807">
    <property type="component" value="Chromosome"/>
</dbReference>
<dbReference type="GO" id="GO:0005737">
    <property type="term" value="C:cytoplasm"/>
    <property type="evidence" value="ECO:0007669"/>
    <property type="project" value="UniProtKB-UniRule"/>
</dbReference>
<dbReference type="GO" id="GO:0009295">
    <property type="term" value="C:nucleoid"/>
    <property type="evidence" value="ECO:0007669"/>
    <property type="project" value="UniProtKB-SubCell"/>
</dbReference>
<dbReference type="GO" id="GO:0003700">
    <property type="term" value="F:DNA-binding transcription factor activity"/>
    <property type="evidence" value="ECO:0000318"/>
    <property type="project" value="GO_Central"/>
</dbReference>
<dbReference type="GO" id="GO:0000976">
    <property type="term" value="F:transcription cis-regulatory region binding"/>
    <property type="evidence" value="ECO:0000318"/>
    <property type="project" value="GO_Central"/>
</dbReference>
<dbReference type="GO" id="GO:2000143">
    <property type="term" value="P:negative regulation of DNA-templated transcription initiation"/>
    <property type="evidence" value="ECO:0000318"/>
    <property type="project" value="GO_Central"/>
</dbReference>
<dbReference type="CDD" id="cd16321">
    <property type="entry name" value="MraZ_C"/>
    <property type="match status" value="1"/>
</dbReference>
<dbReference type="Gene3D" id="3.40.1550.20">
    <property type="entry name" value="Transcriptional regulator MraZ domain"/>
    <property type="match status" value="1"/>
</dbReference>
<dbReference type="HAMAP" id="MF_01008">
    <property type="entry name" value="MraZ"/>
    <property type="match status" value="1"/>
</dbReference>
<dbReference type="InterPro" id="IPR003444">
    <property type="entry name" value="MraZ"/>
</dbReference>
<dbReference type="InterPro" id="IPR035644">
    <property type="entry name" value="MraZ_C"/>
</dbReference>
<dbReference type="InterPro" id="IPR020603">
    <property type="entry name" value="MraZ_dom"/>
</dbReference>
<dbReference type="InterPro" id="IPR038619">
    <property type="entry name" value="MraZ_sf"/>
</dbReference>
<dbReference type="InterPro" id="IPR007159">
    <property type="entry name" value="SpoVT-AbrB_dom"/>
</dbReference>
<dbReference type="InterPro" id="IPR037914">
    <property type="entry name" value="SpoVT-AbrB_sf"/>
</dbReference>
<dbReference type="NCBIfam" id="TIGR00242">
    <property type="entry name" value="division/cell wall cluster transcriptional repressor MraZ"/>
    <property type="match status" value="1"/>
</dbReference>
<dbReference type="PANTHER" id="PTHR34701">
    <property type="entry name" value="TRANSCRIPTIONAL REGULATOR MRAZ"/>
    <property type="match status" value="1"/>
</dbReference>
<dbReference type="PANTHER" id="PTHR34701:SF1">
    <property type="entry name" value="TRANSCRIPTIONAL REGULATOR MRAZ"/>
    <property type="match status" value="1"/>
</dbReference>
<dbReference type="Pfam" id="PF02381">
    <property type="entry name" value="MraZ"/>
    <property type="match status" value="2"/>
</dbReference>
<dbReference type="SUPFAM" id="SSF89447">
    <property type="entry name" value="AbrB/MazE/MraZ-like"/>
    <property type="match status" value="1"/>
</dbReference>
<dbReference type="PROSITE" id="PS51740">
    <property type="entry name" value="SPOVT_ABRB"/>
    <property type="match status" value="2"/>
</dbReference>
<organism>
    <name type="scientific">Mycoplasma genitalium (strain ATCC 33530 / DSM 19775 / NCTC 10195 / G37)</name>
    <name type="common">Mycoplasmoides genitalium</name>
    <dbReference type="NCBI Taxonomy" id="243273"/>
    <lineage>
        <taxon>Bacteria</taxon>
        <taxon>Bacillati</taxon>
        <taxon>Mycoplasmatota</taxon>
        <taxon>Mycoplasmoidales</taxon>
        <taxon>Mycoplasmoidaceae</taxon>
        <taxon>Mycoplasmoides</taxon>
    </lineage>
</organism>
<protein>
    <recommendedName>
        <fullName>Transcriptional regulator MraZ</fullName>
    </recommendedName>
</protein>
<sequence length="141" mass="16307">MLLGTFNLTLDNKNRISLPAKLRSFFDSSIVINRGFENCLEIRKPADFESYFQTFNNFPNTQKDTRTLKRLIFANANLVELDSANRILIPNNLISDAKLDKEIVLIGQFDHLEVWDKVQYEQYLASSESLETVAERMKDAK</sequence>
<keyword id="KW-0963">Cytoplasm</keyword>
<keyword id="KW-0238">DNA-binding</keyword>
<keyword id="KW-1185">Reference proteome</keyword>
<keyword id="KW-0677">Repeat</keyword>
<keyword id="KW-0804">Transcription</keyword>
<keyword id="KW-0805">Transcription regulation</keyword>
<accession>P47463</accession>
<accession>Q49315</accession>
<feature type="chain" id="PRO_0000108502" description="Transcriptional regulator MraZ">
    <location>
        <begin position="1"/>
        <end position="141"/>
    </location>
</feature>
<feature type="domain" description="SpoVT-AbrB 1" evidence="2">
    <location>
        <begin position="5"/>
        <end position="47"/>
    </location>
</feature>
<feature type="domain" description="SpoVT-AbrB 2" evidence="2">
    <location>
        <begin position="76"/>
        <end position="119"/>
    </location>
</feature>
<feature type="sequence conflict" description="In Ref. 2; AAD12481." evidence="4" ref="2">
    <original>GTFNLT</original>
    <variation>VPLILP</variation>
    <location>
        <begin position="4"/>
        <end position="9"/>
    </location>
</feature>
<feature type="sequence conflict" description="In Ref. 2; AAD12481." evidence="4" ref="2">
    <original>P</original>
    <variation>L</variation>
    <location>
        <position position="45"/>
    </location>
</feature>
<reference key="1">
    <citation type="journal article" date="1995" name="Science">
        <title>The minimal gene complement of Mycoplasma genitalium.</title>
        <authorList>
            <person name="Fraser C.M."/>
            <person name="Gocayne J.D."/>
            <person name="White O."/>
            <person name="Adams M.D."/>
            <person name="Clayton R.A."/>
            <person name="Fleischmann R.D."/>
            <person name="Bult C.J."/>
            <person name="Kerlavage A.R."/>
            <person name="Sutton G.G."/>
            <person name="Kelley J.M."/>
            <person name="Fritchman J.L."/>
            <person name="Weidman J.F."/>
            <person name="Small K.V."/>
            <person name="Sandusky M."/>
            <person name="Fuhrmann J.L."/>
            <person name="Nguyen D.T."/>
            <person name="Utterback T.R."/>
            <person name="Saudek D.M."/>
            <person name="Phillips C.A."/>
            <person name="Merrick J.M."/>
            <person name="Tomb J.-F."/>
            <person name="Dougherty B.A."/>
            <person name="Bott K.F."/>
            <person name="Hu P.-C."/>
            <person name="Lucier T.S."/>
            <person name="Peterson S.N."/>
            <person name="Smith H.O."/>
            <person name="Hutchison C.A. III"/>
            <person name="Venter J.C."/>
        </authorList>
    </citation>
    <scope>NUCLEOTIDE SEQUENCE [LARGE SCALE GENOMIC DNA]</scope>
    <source>
        <strain>ATCC 33530 / DSM 19775 / NCTC 10195 / G37</strain>
    </source>
</reference>
<reference key="2">
    <citation type="journal article" date="1993" name="J. Bacteriol.">
        <title>A survey of the Mycoplasma genitalium genome by using random sequencing.</title>
        <authorList>
            <person name="Peterson S.N."/>
            <person name="Hu P.-C."/>
            <person name="Bott K.F."/>
            <person name="Hutchison C.A. III"/>
        </authorList>
    </citation>
    <scope>NUCLEOTIDE SEQUENCE [GENOMIC DNA] OF 4-99</scope>
    <source>
        <strain>ATCC 33530 / DSM 19775 / NCTC 10195 / G37</strain>
    </source>
</reference>
<reference key="3">
    <citation type="journal article" date="2006" name="Proc. Natl. Acad. Sci. U.S.A.">
        <title>Essential genes of a minimal bacterium.</title>
        <authorList>
            <person name="Glass J.I."/>
            <person name="Assad-Garcia N."/>
            <person name="Alperovich N."/>
            <person name="Yooseph S."/>
            <person name="Lewis M.R."/>
            <person name="Maruf M."/>
            <person name="Hutchison C.A. III"/>
            <person name="Smith H.O."/>
            <person name="Venter J.C."/>
        </authorList>
    </citation>
    <scope>DISRUPTION PHENOTYPE</scope>
    <source>
        <strain>ATCC 33530 / DSM 19775 / NCTC 10195 / G37</strain>
    </source>
</reference>
<proteinExistence type="inferred from homology"/>
<gene>
    <name evidence="1" type="primary">mraZ</name>
    <name type="ordered locus">MG221</name>
</gene>
<comment type="subunit">
    <text evidence="1">Forms oligomers.</text>
</comment>
<comment type="subcellular location">
    <subcellularLocation>
        <location evidence="1">Cytoplasm</location>
        <location evidence="1">Nucleoid</location>
    </subcellularLocation>
</comment>
<comment type="disruption phenotype">
    <text evidence="3">Probably essential, it was not disrupted in a global transposon mutagenesis study.</text>
</comment>
<comment type="similarity">
    <text evidence="1">Belongs to the MraZ family.</text>
</comment>